<comment type="function">
    <text evidence="3">Involved in degradation of plant cell walls. Hydrolyzes the feruloyl-arabinose ester bond in arabinoxylans as well as the feruloyl-galactose and feruloyl-arabinose ester bonds in pectin.</text>
</comment>
<comment type="catalytic activity">
    <reaction evidence="3">
        <text>feruloyl-polysaccharide + H2O = ferulate + polysaccharide.</text>
        <dbReference type="EC" id="3.1.1.73"/>
    </reaction>
</comment>
<comment type="subcellular location">
    <subcellularLocation>
        <location evidence="1">Secreted</location>
    </subcellularLocation>
</comment>
<comment type="similarity">
    <text evidence="5">Belongs to the tannase family.</text>
</comment>
<dbReference type="EC" id="3.1.1.73" evidence="3"/>
<dbReference type="EMBL" id="CH476596">
    <property type="protein sequence ID" value="EAU37174.1"/>
    <property type="molecule type" value="Genomic_DNA"/>
</dbReference>
<dbReference type="RefSeq" id="XP_001211390.1">
    <property type="nucleotide sequence ID" value="XM_001211390.1"/>
</dbReference>
<dbReference type="SMR" id="Q0CVS2"/>
<dbReference type="STRING" id="341663.Q0CVS2"/>
<dbReference type="ESTHER" id="asptn-faeb1">
    <property type="family name" value="Tannase"/>
</dbReference>
<dbReference type="GlyCosmos" id="Q0CVS2">
    <property type="glycosylation" value="9 sites, No reported glycans"/>
</dbReference>
<dbReference type="EnsemblFungi" id="EAU37174">
    <property type="protein sequence ID" value="EAU37174"/>
    <property type="gene ID" value="ATEG_02212"/>
</dbReference>
<dbReference type="GeneID" id="4316909"/>
<dbReference type="VEuPathDB" id="FungiDB:ATEG_02212"/>
<dbReference type="eggNOG" id="ENOG502QPXZ">
    <property type="taxonomic scope" value="Eukaryota"/>
</dbReference>
<dbReference type="HOGENOM" id="CLU_014819_1_0_1"/>
<dbReference type="OMA" id="AWFPREY"/>
<dbReference type="OrthoDB" id="3039123at2759"/>
<dbReference type="Proteomes" id="UP000007963">
    <property type="component" value="Unassembled WGS sequence"/>
</dbReference>
<dbReference type="GO" id="GO:0005576">
    <property type="term" value="C:extracellular region"/>
    <property type="evidence" value="ECO:0007669"/>
    <property type="project" value="UniProtKB-SubCell"/>
</dbReference>
<dbReference type="GO" id="GO:0030600">
    <property type="term" value="F:feruloyl esterase activity"/>
    <property type="evidence" value="ECO:0007669"/>
    <property type="project" value="UniProtKB-EC"/>
</dbReference>
<dbReference type="GO" id="GO:0046872">
    <property type="term" value="F:metal ion binding"/>
    <property type="evidence" value="ECO:0007669"/>
    <property type="project" value="UniProtKB-KW"/>
</dbReference>
<dbReference type="GO" id="GO:0045493">
    <property type="term" value="P:xylan catabolic process"/>
    <property type="evidence" value="ECO:0007669"/>
    <property type="project" value="UniProtKB-KW"/>
</dbReference>
<dbReference type="Gene3D" id="3.40.50.1820">
    <property type="entry name" value="alpha/beta hydrolase"/>
    <property type="match status" value="1"/>
</dbReference>
<dbReference type="InterPro" id="IPR029058">
    <property type="entry name" value="AB_hydrolase_fold"/>
</dbReference>
<dbReference type="InterPro" id="IPR011118">
    <property type="entry name" value="Tannase/feruloyl_esterase"/>
</dbReference>
<dbReference type="PANTHER" id="PTHR33938">
    <property type="entry name" value="FERULOYL ESTERASE B-RELATED"/>
    <property type="match status" value="1"/>
</dbReference>
<dbReference type="PANTHER" id="PTHR33938:SF15">
    <property type="entry name" value="FERULOYL ESTERASE B-RELATED"/>
    <property type="match status" value="1"/>
</dbReference>
<dbReference type="Pfam" id="PF07519">
    <property type="entry name" value="Tannase"/>
    <property type="match status" value="1"/>
</dbReference>
<dbReference type="SUPFAM" id="SSF53474">
    <property type="entry name" value="alpha/beta-Hydrolases"/>
    <property type="match status" value="1"/>
</dbReference>
<evidence type="ECO:0000250" key="1"/>
<evidence type="ECO:0000250" key="2">
    <source>
        <dbReference type="UniProtKB" id="Q2UP89"/>
    </source>
</evidence>
<evidence type="ECO:0000250" key="3">
    <source>
        <dbReference type="UniProtKB" id="Q8WZI8"/>
    </source>
</evidence>
<evidence type="ECO:0000255" key="4"/>
<evidence type="ECO:0000305" key="5"/>
<feature type="signal peptide" evidence="4">
    <location>
        <begin position="1"/>
        <end position="19"/>
    </location>
</feature>
<feature type="chain" id="PRO_0000394925" description="Probable feruloyl esterase B-1">
    <location>
        <begin position="20"/>
        <end position="529"/>
    </location>
</feature>
<feature type="active site" description="Acyl-ester intermediate" evidence="2">
    <location>
        <position position="188"/>
    </location>
</feature>
<feature type="active site" description="Charge relay system" evidence="2">
    <location>
        <position position="404"/>
    </location>
</feature>
<feature type="active site" description="Charge relay system" evidence="2">
    <location>
        <position position="444"/>
    </location>
</feature>
<feature type="binding site" evidence="2">
    <location>
        <position position="257"/>
    </location>
    <ligand>
        <name>Ca(2+)</name>
        <dbReference type="ChEBI" id="CHEBI:29108"/>
    </ligand>
</feature>
<feature type="binding site" evidence="2">
    <location>
        <position position="260"/>
    </location>
    <ligand>
        <name>Ca(2+)</name>
        <dbReference type="ChEBI" id="CHEBI:29108"/>
    </ligand>
</feature>
<feature type="binding site" evidence="2">
    <location>
        <position position="262"/>
    </location>
    <ligand>
        <name>Ca(2+)</name>
        <dbReference type="ChEBI" id="CHEBI:29108"/>
    </ligand>
</feature>
<feature type="binding site" evidence="2">
    <location>
        <position position="264"/>
    </location>
    <ligand>
        <name>Ca(2+)</name>
        <dbReference type="ChEBI" id="CHEBI:29108"/>
    </ligand>
</feature>
<feature type="binding site" evidence="2">
    <location>
        <position position="266"/>
    </location>
    <ligand>
        <name>Ca(2+)</name>
        <dbReference type="ChEBI" id="CHEBI:29108"/>
    </ligand>
</feature>
<feature type="glycosylation site" description="N-linked (GlcNAc...) asparagine" evidence="4">
    <location>
        <position position="53"/>
    </location>
</feature>
<feature type="glycosylation site" description="N-linked (GlcNAc...) asparagine" evidence="4">
    <location>
        <position position="64"/>
    </location>
</feature>
<feature type="glycosylation site" description="N-linked (GlcNAc...) asparagine" evidence="4">
    <location>
        <position position="85"/>
    </location>
</feature>
<feature type="glycosylation site" description="N-linked (GlcNAc...) asparagine" evidence="4">
    <location>
        <position position="98"/>
    </location>
</feature>
<feature type="glycosylation site" description="N-linked (GlcNAc...) asparagine" evidence="4">
    <location>
        <position position="138"/>
    </location>
</feature>
<feature type="glycosylation site" description="N-linked (GlcNAc...) asparagine" evidence="4">
    <location>
        <position position="233"/>
    </location>
</feature>
<feature type="glycosylation site" description="N-linked (GlcNAc...) asparagine" evidence="4">
    <location>
        <position position="286"/>
    </location>
</feature>
<feature type="glycosylation site" description="N-linked (GlcNAc...) asparagine" evidence="4">
    <location>
        <position position="290"/>
    </location>
</feature>
<feature type="glycosylation site" description="N-linked (GlcNAc...) asparagine" evidence="4">
    <location>
        <position position="354"/>
    </location>
</feature>
<feature type="disulfide bond" evidence="2">
    <location>
        <begin position="27"/>
        <end position="75"/>
    </location>
</feature>
<feature type="disulfide bond" evidence="2">
    <location>
        <begin position="63"/>
        <end position="114"/>
    </location>
</feature>
<feature type="disulfide bond" evidence="2">
    <location>
        <begin position="187"/>
        <end position="445"/>
    </location>
</feature>
<feature type="disulfide bond" evidence="2">
    <location>
        <begin position="256"/>
        <end position="273"/>
    </location>
</feature>
<feature type="disulfide bond" evidence="2">
    <location>
        <begin position="282"/>
        <end position="295"/>
    </location>
</feature>
<feature type="disulfide bond" evidence="2">
    <location>
        <begin position="505"/>
        <end position="527"/>
    </location>
</feature>
<organism>
    <name type="scientific">Aspergillus terreus (strain NIH 2624 / FGSC A1156)</name>
    <dbReference type="NCBI Taxonomy" id="341663"/>
    <lineage>
        <taxon>Eukaryota</taxon>
        <taxon>Fungi</taxon>
        <taxon>Dikarya</taxon>
        <taxon>Ascomycota</taxon>
        <taxon>Pezizomycotina</taxon>
        <taxon>Eurotiomycetes</taxon>
        <taxon>Eurotiomycetidae</taxon>
        <taxon>Eurotiales</taxon>
        <taxon>Aspergillaceae</taxon>
        <taxon>Aspergillus</taxon>
        <taxon>Aspergillus subgen. Circumdati</taxon>
    </lineage>
</organism>
<accession>Q0CVS2</accession>
<gene>
    <name type="primary">faeB-1</name>
    <name type="ORF">ATEG_02212</name>
</gene>
<reference key="1">
    <citation type="submission" date="2005-09" db="EMBL/GenBank/DDBJ databases">
        <title>Annotation of the Aspergillus terreus NIH2624 genome.</title>
        <authorList>
            <person name="Birren B.W."/>
            <person name="Lander E.S."/>
            <person name="Galagan J.E."/>
            <person name="Nusbaum C."/>
            <person name="Devon K."/>
            <person name="Henn M."/>
            <person name="Ma L.-J."/>
            <person name="Jaffe D.B."/>
            <person name="Butler J."/>
            <person name="Alvarez P."/>
            <person name="Gnerre S."/>
            <person name="Grabherr M."/>
            <person name="Kleber M."/>
            <person name="Mauceli E.W."/>
            <person name="Brockman W."/>
            <person name="Rounsley S."/>
            <person name="Young S.K."/>
            <person name="LaButti K."/>
            <person name="Pushparaj V."/>
            <person name="DeCaprio D."/>
            <person name="Crawford M."/>
            <person name="Koehrsen M."/>
            <person name="Engels R."/>
            <person name="Montgomery P."/>
            <person name="Pearson M."/>
            <person name="Howarth C."/>
            <person name="Larson L."/>
            <person name="Luoma S."/>
            <person name="White J."/>
            <person name="Alvarado L."/>
            <person name="Kodira C.D."/>
            <person name="Zeng Q."/>
            <person name="Oleary S."/>
            <person name="Yandava C."/>
            <person name="Denning D.W."/>
            <person name="Nierman W.C."/>
            <person name="Milne T."/>
            <person name="Madden K."/>
        </authorList>
    </citation>
    <scope>NUCLEOTIDE SEQUENCE [LARGE SCALE GENOMIC DNA]</scope>
    <source>
        <strain>NIH 2624 / FGSC A1156</strain>
    </source>
</reference>
<keyword id="KW-0106">Calcium</keyword>
<keyword id="KW-0119">Carbohydrate metabolism</keyword>
<keyword id="KW-1015">Disulfide bond</keyword>
<keyword id="KW-0325">Glycoprotein</keyword>
<keyword id="KW-0378">Hydrolase</keyword>
<keyword id="KW-0479">Metal-binding</keyword>
<keyword id="KW-0624">Polysaccharide degradation</keyword>
<keyword id="KW-1185">Reference proteome</keyword>
<keyword id="KW-0964">Secreted</keyword>
<keyword id="KW-0719">Serine esterase</keyword>
<keyword id="KW-0732">Signal</keyword>
<keyword id="KW-0858">Xylan degradation</keyword>
<sequence length="529" mass="59051">MKISYFFVASLSYVSVARASQSFEERCTDFRDSINSLPNVQATIVEYVAGSQNVSLPDNDPSCNQSSQFVTADICRAAMVVKTSNSSQIVMEAWFPRNYTGRFLATGNGGFGGCIRYPELDYTTRLGFAAVATNNGHNGTSAEAFLNSPEVLRDFADRSIHTAAKVGKELTKRFYAEGFRKSYYLGCSTGGRQGFKSVQQYPHDFDGVVAGAPAVHEVNLISWAGHIYEITGNKSEETYLPPALWNIVHSEVMRQCDGLDGAQDNLIEDPDLCHPTFENIMCPSDNKSNNGSLSCITEAQANTVIQLMSPYYNTDGSMLFPGMQPGSETVSSALLYTGVPTPYAKEWFRYVVYNDTNWDPTTFNIKDAQAALKQNPFNIQTWEGDLSRFQNAGGKIITYHGMQDFLVSSFNSREYYKHVHETMGLAPDQLDEFYRYFRISGMAHCYYGDGASYIGGSAPSAYSDDPEDNVLMAMVEWVEKGIAPEFIRGTKLDQDGHPQYTRKHCRYPRRNVYRGPGSYLDENAWECVL</sequence>
<protein>
    <recommendedName>
        <fullName>Probable feruloyl esterase B-1</fullName>
        <ecNumber evidence="3">3.1.1.73</ecNumber>
    </recommendedName>
    <alternativeName>
        <fullName>Ferulic acid esterase B-1</fullName>
        <shortName>FAEB-1</shortName>
    </alternativeName>
</protein>
<name>FAEB1_ASPTN</name>
<proteinExistence type="inferred from homology"/>